<feature type="chain" id="PRO_0000452671" description="NAC domain-containing protein 20">
    <location>
        <begin position="1"/>
        <end position="320"/>
    </location>
</feature>
<feature type="domain" description="NAC" evidence="2">
    <location>
        <begin position="14"/>
        <end position="170"/>
    </location>
</feature>
<feature type="DNA-binding region" evidence="2">
    <location>
        <begin position="114"/>
        <end position="176"/>
    </location>
</feature>
<feature type="sequence conflict" description="In Ref. 1; APH07720/APH07724/APH07725." evidence="7" ref="1">
    <original>SYSTL</original>
    <variation>PPP</variation>
    <location>
        <begin position="239"/>
        <end position="243"/>
    </location>
</feature>
<gene>
    <name evidence="5" type="primary">NAC20</name>
    <name evidence="7" type="synonym">DLN1</name>
    <name evidence="8" type="ORF">OsI_00041</name>
</gene>
<reference key="1">
    <citation type="journal article" date="2016" name="Front. Plant Sci.">
        <title>Three rice NAC transcription factors heteromerize and are associated with seed size.</title>
        <authorList>
            <person name="Mathew I.E."/>
            <person name="Das S."/>
            <person name="Mahto A."/>
            <person name="Agarwal P."/>
        </authorList>
    </citation>
    <scope>NUCLEOTIDE SEQUENCE [MRNA]</scope>
    <scope>FUNCTION</scope>
    <scope>INTERACTION WITH NAC26</scope>
    <scope>SUBCELLULAR LOCATION</scope>
    <scope>TISSUE SPECIFICITY</scope>
</reference>
<reference key="2">
    <citation type="journal article" date="2005" name="PLoS Biol.">
        <title>The genomes of Oryza sativa: a history of duplications.</title>
        <authorList>
            <person name="Yu J."/>
            <person name="Wang J."/>
            <person name="Lin W."/>
            <person name="Li S."/>
            <person name="Li H."/>
            <person name="Zhou J."/>
            <person name="Ni P."/>
            <person name="Dong W."/>
            <person name="Hu S."/>
            <person name="Zeng C."/>
            <person name="Zhang J."/>
            <person name="Zhang Y."/>
            <person name="Li R."/>
            <person name="Xu Z."/>
            <person name="Li S."/>
            <person name="Li X."/>
            <person name="Zheng H."/>
            <person name="Cong L."/>
            <person name="Lin L."/>
            <person name="Yin J."/>
            <person name="Geng J."/>
            <person name="Li G."/>
            <person name="Shi J."/>
            <person name="Liu J."/>
            <person name="Lv H."/>
            <person name="Li J."/>
            <person name="Wang J."/>
            <person name="Deng Y."/>
            <person name="Ran L."/>
            <person name="Shi X."/>
            <person name="Wang X."/>
            <person name="Wu Q."/>
            <person name="Li C."/>
            <person name="Ren X."/>
            <person name="Wang J."/>
            <person name="Wang X."/>
            <person name="Li D."/>
            <person name="Liu D."/>
            <person name="Zhang X."/>
            <person name="Ji Z."/>
            <person name="Zhao W."/>
            <person name="Sun Y."/>
            <person name="Zhang Z."/>
            <person name="Bao J."/>
            <person name="Han Y."/>
            <person name="Dong L."/>
            <person name="Ji J."/>
            <person name="Chen P."/>
            <person name="Wu S."/>
            <person name="Liu J."/>
            <person name="Xiao Y."/>
            <person name="Bu D."/>
            <person name="Tan J."/>
            <person name="Yang L."/>
            <person name="Ye C."/>
            <person name="Zhang J."/>
            <person name="Xu J."/>
            <person name="Zhou Y."/>
            <person name="Yu Y."/>
            <person name="Zhang B."/>
            <person name="Zhuang S."/>
            <person name="Wei H."/>
            <person name="Liu B."/>
            <person name="Lei M."/>
            <person name="Yu H."/>
            <person name="Li Y."/>
            <person name="Xu H."/>
            <person name="Wei S."/>
            <person name="He X."/>
            <person name="Fang L."/>
            <person name="Zhang Z."/>
            <person name="Zhang Y."/>
            <person name="Huang X."/>
            <person name="Su Z."/>
            <person name="Tong W."/>
            <person name="Li J."/>
            <person name="Tong Z."/>
            <person name="Li S."/>
            <person name="Ye J."/>
            <person name="Wang L."/>
            <person name="Fang L."/>
            <person name="Lei T."/>
            <person name="Chen C.-S."/>
            <person name="Chen H.-C."/>
            <person name="Xu Z."/>
            <person name="Li H."/>
            <person name="Huang H."/>
            <person name="Zhang F."/>
            <person name="Xu H."/>
            <person name="Li N."/>
            <person name="Zhao C."/>
            <person name="Li S."/>
            <person name="Dong L."/>
            <person name="Huang Y."/>
            <person name="Li L."/>
            <person name="Xi Y."/>
            <person name="Qi Q."/>
            <person name="Li W."/>
            <person name="Zhang B."/>
            <person name="Hu W."/>
            <person name="Zhang Y."/>
            <person name="Tian X."/>
            <person name="Jiao Y."/>
            <person name="Liang X."/>
            <person name="Jin J."/>
            <person name="Gao L."/>
            <person name="Zheng W."/>
            <person name="Hao B."/>
            <person name="Liu S.-M."/>
            <person name="Wang W."/>
            <person name="Yuan L."/>
            <person name="Cao M."/>
            <person name="McDermott J."/>
            <person name="Samudrala R."/>
            <person name="Wang J."/>
            <person name="Wong G.K.-S."/>
            <person name="Yang H."/>
        </authorList>
    </citation>
    <scope>NUCLEOTIDE SEQUENCE [LARGE SCALE GENOMIC DNA]</scope>
    <source>
        <strain>cv. 93-11</strain>
    </source>
</reference>
<reference key="3">
    <citation type="journal article" date="2020" name="Plant Physiol.">
        <title>The NAC transcription factors OsNAC20 and OsNAC26 regulate starch and storage protein synthesis.</title>
        <authorList>
            <person name="Wang J."/>
            <person name="Chen Z."/>
            <person name="Zhang Q."/>
            <person name="Meng S."/>
            <person name="Wei C."/>
        </authorList>
    </citation>
    <scope>INTERACTION WITH NAC26</scope>
    <scope>SUBCELLULAR LOCATION</scope>
</reference>
<accession>A2WJP3</accession>
<accession>A0A1L3MZD9</accession>
<keyword id="KW-0238">DNA-binding</keyword>
<keyword id="KW-0256">Endoplasmic reticulum</keyword>
<keyword id="KW-0539">Nucleus</keyword>
<keyword id="KW-1185">Reference proteome</keyword>
<keyword id="KW-0804">Transcription</keyword>
<keyword id="KW-0805">Transcription regulation</keyword>
<organism>
    <name type="scientific">Oryza sativa subsp. indica</name>
    <name type="common">Rice</name>
    <dbReference type="NCBI Taxonomy" id="39946"/>
    <lineage>
        <taxon>Eukaryota</taxon>
        <taxon>Viridiplantae</taxon>
        <taxon>Streptophyta</taxon>
        <taxon>Embryophyta</taxon>
        <taxon>Tracheophyta</taxon>
        <taxon>Spermatophyta</taxon>
        <taxon>Magnoliopsida</taxon>
        <taxon>Liliopsida</taxon>
        <taxon>Poales</taxon>
        <taxon>Poaceae</taxon>
        <taxon>BOP clade</taxon>
        <taxon>Oryzoideae</taxon>
        <taxon>Oryzeae</taxon>
        <taxon>Oryzinae</taxon>
        <taxon>Oryza</taxon>
        <taxon>Oryza sativa</taxon>
    </lineage>
</organism>
<name>NAC20_ORYSI</name>
<protein>
    <recommendedName>
        <fullName evidence="5">NAC domain-containing protein 20</fullName>
        <shortName evidence="5">ONAC020</shortName>
        <shortName evidence="6">OsNAC20</shortName>
    </recommendedName>
</protein>
<comment type="function">
    <text evidence="1 3">Transcription factor that acts redundantly with NAC26 to regulate the expression of genes involved in the biosynthesis of starch and storage proteins in grain. Directly binds to the promoters of starch synthase 1 (SS1), pullulanase (PUL), glutelin A1 (GLUA1), glutelins B4 and B5 (GLUB4 and GLUB5), alpha-globulin and 16 kDa prolamin, and activates their expression (By similarity). Possesses transactivation activity in yeast (PubMed:27872632).</text>
</comment>
<comment type="subunit">
    <text evidence="3 4">Forms homodimers (PubMed:32989010). Forms heterodimers with NAC26 (PubMed:27872632, PubMed:32989010).</text>
</comment>
<comment type="subcellular location">
    <subcellularLocation>
        <location evidence="2 4">Nucleus</location>
    </subcellularLocation>
    <subcellularLocation>
        <location evidence="3">Endoplasmic reticulum</location>
    </subcellularLocation>
</comment>
<comment type="tissue specificity">
    <text evidence="3">Expressed in developing seeds.</text>
</comment>
<comment type="domain">
    <text evidence="2">The NAC domain includes a DNA binding domain and a dimerization domain.</text>
</comment>
<proteinExistence type="evidence at protein level"/>
<dbReference type="EMBL" id="KX953272">
    <property type="protein sequence ID" value="APH07720.1"/>
    <property type="molecule type" value="mRNA"/>
</dbReference>
<dbReference type="EMBL" id="KX953277">
    <property type="protein sequence ID" value="APH07725.1"/>
    <property type="molecule type" value="mRNA"/>
</dbReference>
<dbReference type="EMBL" id="KX953276">
    <property type="protein sequence ID" value="APH07724.1"/>
    <property type="molecule type" value="mRNA"/>
</dbReference>
<dbReference type="EMBL" id="CM000126">
    <property type="protein sequence ID" value="EAY72189.1"/>
    <property type="molecule type" value="Genomic_DNA"/>
</dbReference>
<dbReference type="SMR" id="A2WJP3"/>
<dbReference type="STRING" id="39946.A2WJP3"/>
<dbReference type="EnsemblPlants" id="BGIOSGA002597-TA">
    <property type="protein sequence ID" value="BGIOSGA002597-PA"/>
    <property type="gene ID" value="BGIOSGA002597"/>
</dbReference>
<dbReference type="Gramene" id="BGIOSGA002597-TA">
    <property type="protein sequence ID" value="BGIOSGA002597-PA"/>
    <property type="gene ID" value="BGIOSGA002597"/>
</dbReference>
<dbReference type="HOGENOM" id="CLU_035664_6_0_1"/>
<dbReference type="OMA" id="LMAPPSY"/>
<dbReference type="Proteomes" id="UP000007015">
    <property type="component" value="Chromosome 1"/>
</dbReference>
<dbReference type="GO" id="GO:0005783">
    <property type="term" value="C:endoplasmic reticulum"/>
    <property type="evidence" value="ECO:0000314"/>
    <property type="project" value="UniProtKB"/>
</dbReference>
<dbReference type="GO" id="GO:0005634">
    <property type="term" value="C:nucleus"/>
    <property type="evidence" value="ECO:0000314"/>
    <property type="project" value="UniProtKB"/>
</dbReference>
<dbReference type="GO" id="GO:0003677">
    <property type="term" value="F:DNA binding"/>
    <property type="evidence" value="ECO:0007669"/>
    <property type="project" value="UniProtKB-KW"/>
</dbReference>
<dbReference type="GO" id="GO:0042803">
    <property type="term" value="F:protein homodimerization activity"/>
    <property type="evidence" value="ECO:0000314"/>
    <property type="project" value="UniProtKB"/>
</dbReference>
<dbReference type="GO" id="GO:0045893">
    <property type="term" value="P:positive regulation of DNA-templated transcription"/>
    <property type="evidence" value="ECO:0007669"/>
    <property type="project" value="EnsemblPlants"/>
</dbReference>
<dbReference type="GO" id="GO:0006355">
    <property type="term" value="P:regulation of DNA-templated transcription"/>
    <property type="evidence" value="ECO:0000314"/>
    <property type="project" value="UniProtKB"/>
</dbReference>
<dbReference type="GO" id="GO:2000014">
    <property type="term" value="P:regulation of endosperm development"/>
    <property type="evidence" value="ECO:0007669"/>
    <property type="project" value="EnsemblPlants"/>
</dbReference>
<dbReference type="FunFam" id="2.170.150.80:FF:000006">
    <property type="entry name" value="NAC domain-containing protein 100-like"/>
    <property type="match status" value="1"/>
</dbReference>
<dbReference type="Gene3D" id="2.170.150.80">
    <property type="entry name" value="NAC domain"/>
    <property type="match status" value="1"/>
</dbReference>
<dbReference type="InterPro" id="IPR003441">
    <property type="entry name" value="NAC-dom"/>
</dbReference>
<dbReference type="InterPro" id="IPR036093">
    <property type="entry name" value="NAC_dom_sf"/>
</dbReference>
<dbReference type="PANTHER" id="PTHR31744:SF92">
    <property type="entry name" value="NAC DOMAIN-CONTAINING PROTEIN 87"/>
    <property type="match status" value="1"/>
</dbReference>
<dbReference type="PANTHER" id="PTHR31744">
    <property type="entry name" value="PROTEIN CUP-SHAPED COTYLEDON 2-RELATED"/>
    <property type="match status" value="1"/>
</dbReference>
<dbReference type="Pfam" id="PF02365">
    <property type="entry name" value="NAM"/>
    <property type="match status" value="1"/>
</dbReference>
<dbReference type="SUPFAM" id="SSF101941">
    <property type="entry name" value="NAC domain"/>
    <property type="match status" value="1"/>
</dbReference>
<dbReference type="PROSITE" id="PS51005">
    <property type="entry name" value="NAC"/>
    <property type="match status" value="1"/>
</dbReference>
<evidence type="ECO:0000250" key="1">
    <source>
        <dbReference type="UniProtKB" id="Q9FTY0"/>
    </source>
</evidence>
<evidence type="ECO:0000255" key="2">
    <source>
        <dbReference type="PROSITE-ProRule" id="PRU00353"/>
    </source>
</evidence>
<evidence type="ECO:0000269" key="3">
    <source>
    </source>
</evidence>
<evidence type="ECO:0000269" key="4">
    <source>
    </source>
</evidence>
<evidence type="ECO:0000303" key="5">
    <source>
    </source>
</evidence>
<evidence type="ECO:0000303" key="6">
    <source>
    </source>
</evidence>
<evidence type="ECO:0000305" key="7"/>
<evidence type="ECO:0000312" key="8">
    <source>
        <dbReference type="EMBL" id="EAY72189.1"/>
    </source>
</evidence>
<sequence>MGEQQQQVERQPDLPPGFRFHPTDEEIITFYLAPKVVDSRGFCVAAIGEVDLNKCEPWDLPGKAKMNGEKEWYFYCQKDRKYPTGMRTNRATEAGYWKATGKDKEIFRNHHMLIGMKKTLVFYKGRAPKGDKTNWVMHEYRLADASPPPPPSSAEPPRQDDWAVCRIFHKSSGIKKPVPVAPHQVPAAANYQQQQQMAMASAGIIQVPMQMQMPSMSDQLQMLDDFSTTASLSLMAPPSYSTLPAGFPLQINSGAHPQQFVGNPSMYYHQQQQMDMAGGGFVVSEPSSLVVSPQDAADQNNNAADISSMACTMDAAIWKY</sequence>